<comment type="function">
    <text evidence="1">Binds 23S rRNA and is also seen to make contacts with the A and possibly P site tRNAs.</text>
</comment>
<comment type="subunit">
    <text evidence="1">Part of the 50S ribosomal subunit.</text>
</comment>
<comment type="similarity">
    <text evidence="1">Belongs to the universal ribosomal protein uL16 family.</text>
</comment>
<protein>
    <recommendedName>
        <fullName evidence="1">Large ribosomal subunit protein uL16</fullName>
    </recommendedName>
    <alternativeName>
        <fullName evidence="2">50S ribosomal protein L16</fullName>
    </alternativeName>
</protein>
<evidence type="ECO:0000255" key="1">
    <source>
        <dbReference type="HAMAP-Rule" id="MF_01342"/>
    </source>
</evidence>
<evidence type="ECO:0000305" key="2"/>
<accession>Q1JE51</accession>
<sequence length="137" mass="15452">MLVPKRVKHRREFRGKMRGEAKGGKEVSFGEYGLQATTSHWITNRQIEAARIAMTRYMKRGGKVWIKIFPHKSYTAKAIGVRMGSGKGAPEGWVAPVKRGKVMFEIAGVSEEIAREALRLASHKLPVKCKFVKREAE</sequence>
<proteinExistence type="inferred from homology"/>
<keyword id="KW-0687">Ribonucleoprotein</keyword>
<keyword id="KW-0689">Ribosomal protein</keyword>
<keyword id="KW-0694">RNA-binding</keyword>
<keyword id="KW-0699">rRNA-binding</keyword>
<keyword id="KW-0820">tRNA-binding</keyword>
<dbReference type="EMBL" id="CP000261">
    <property type="protein sequence ID" value="ABF35107.1"/>
    <property type="molecule type" value="Genomic_DNA"/>
</dbReference>
<dbReference type="SMR" id="Q1JE51"/>
<dbReference type="KEGG" id="spj:MGAS2096_Spy0055"/>
<dbReference type="HOGENOM" id="CLU_078858_2_1_9"/>
<dbReference type="GO" id="GO:0022625">
    <property type="term" value="C:cytosolic large ribosomal subunit"/>
    <property type="evidence" value="ECO:0007669"/>
    <property type="project" value="TreeGrafter"/>
</dbReference>
<dbReference type="GO" id="GO:0019843">
    <property type="term" value="F:rRNA binding"/>
    <property type="evidence" value="ECO:0007669"/>
    <property type="project" value="UniProtKB-UniRule"/>
</dbReference>
<dbReference type="GO" id="GO:0003735">
    <property type="term" value="F:structural constituent of ribosome"/>
    <property type="evidence" value="ECO:0007669"/>
    <property type="project" value="InterPro"/>
</dbReference>
<dbReference type="GO" id="GO:0000049">
    <property type="term" value="F:tRNA binding"/>
    <property type="evidence" value="ECO:0007669"/>
    <property type="project" value="UniProtKB-KW"/>
</dbReference>
<dbReference type="GO" id="GO:0006412">
    <property type="term" value="P:translation"/>
    <property type="evidence" value="ECO:0007669"/>
    <property type="project" value="UniProtKB-UniRule"/>
</dbReference>
<dbReference type="CDD" id="cd01433">
    <property type="entry name" value="Ribosomal_L16_L10e"/>
    <property type="match status" value="1"/>
</dbReference>
<dbReference type="FunFam" id="3.90.1170.10:FF:000001">
    <property type="entry name" value="50S ribosomal protein L16"/>
    <property type="match status" value="1"/>
</dbReference>
<dbReference type="Gene3D" id="3.90.1170.10">
    <property type="entry name" value="Ribosomal protein L10e/L16"/>
    <property type="match status" value="1"/>
</dbReference>
<dbReference type="HAMAP" id="MF_01342">
    <property type="entry name" value="Ribosomal_uL16"/>
    <property type="match status" value="1"/>
</dbReference>
<dbReference type="InterPro" id="IPR047873">
    <property type="entry name" value="Ribosomal_uL16"/>
</dbReference>
<dbReference type="InterPro" id="IPR000114">
    <property type="entry name" value="Ribosomal_uL16_bact-type"/>
</dbReference>
<dbReference type="InterPro" id="IPR020798">
    <property type="entry name" value="Ribosomal_uL16_CS"/>
</dbReference>
<dbReference type="InterPro" id="IPR016180">
    <property type="entry name" value="Ribosomal_uL16_dom"/>
</dbReference>
<dbReference type="InterPro" id="IPR036920">
    <property type="entry name" value="Ribosomal_uL16_sf"/>
</dbReference>
<dbReference type="NCBIfam" id="TIGR01164">
    <property type="entry name" value="rplP_bact"/>
    <property type="match status" value="1"/>
</dbReference>
<dbReference type="PANTHER" id="PTHR12220">
    <property type="entry name" value="50S/60S RIBOSOMAL PROTEIN L16"/>
    <property type="match status" value="1"/>
</dbReference>
<dbReference type="PANTHER" id="PTHR12220:SF13">
    <property type="entry name" value="LARGE RIBOSOMAL SUBUNIT PROTEIN UL16M"/>
    <property type="match status" value="1"/>
</dbReference>
<dbReference type="Pfam" id="PF00252">
    <property type="entry name" value="Ribosomal_L16"/>
    <property type="match status" value="1"/>
</dbReference>
<dbReference type="PRINTS" id="PR00060">
    <property type="entry name" value="RIBOSOMALL16"/>
</dbReference>
<dbReference type="SUPFAM" id="SSF54686">
    <property type="entry name" value="Ribosomal protein L16p/L10e"/>
    <property type="match status" value="1"/>
</dbReference>
<dbReference type="PROSITE" id="PS00586">
    <property type="entry name" value="RIBOSOMAL_L16_1"/>
    <property type="match status" value="1"/>
</dbReference>
<dbReference type="PROSITE" id="PS00701">
    <property type="entry name" value="RIBOSOMAL_L16_2"/>
    <property type="match status" value="1"/>
</dbReference>
<gene>
    <name evidence="1" type="primary">rplP</name>
    <name type="ordered locus">MGAS2096_Spy0055</name>
</gene>
<name>RL16_STRPB</name>
<organism>
    <name type="scientific">Streptococcus pyogenes serotype M12 (strain MGAS2096)</name>
    <dbReference type="NCBI Taxonomy" id="370553"/>
    <lineage>
        <taxon>Bacteria</taxon>
        <taxon>Bacillati</taxon>
        <taxon>Bacillota</taxon>
        <taxon>Bacilli</taxon>
        <taxon>Lactobacillales</taxon>
        <taxon>Streptococcaceae</taxon>
        <taxon>Streptococcus</taxon>
    </lineage>
</organism>
<reference key="1">
    <citation type="journal article" date="2006" name="Proc. Natl. Acad. Sci. U.S.A.">
        <title>Molecular genetic anatomy of inter- and intraserotype variation in the human bacterial pathogen group A Streptococcus.</title>
        <authorList>
            <person name="Beres S.B."/>
            <person name="Richter E.W."/>
            <person name="Nagiec M.J."/>
            <person name="Sumby P."/>
            <person name="Porcella S.F."/>
            <person name="DeLeo F.R."/>
            <person name="Musser J.M."/>
        </authorList>
    </citation>
    <scope>NUCLEOTIDE SEQUENCE [LARGE SCALE GENOMIC DNA]</scope>
    <source>
        <strain>MGAS2096</strain>
    </source>
</reference>
<feature type="chain" id="PRO_0000251677" description="Large ribosomal subunit protein uL16">
    <location>
        <begin position="1"/>
        <end position="137"/>
    </location>
</feature>